<comment type="function">
    <text evidence="2 5 9">Transcription activator that binds to the secondary wall NAC binding element (SNBE), 5'-(T/A)NN(C/T)(T/C/G)TNNNNNNNA(A/C)GN(A/C/T)(A/T)-3', in the promoter of target genes (By similarity). Involved in xylem formation by promoting the expression of secondary wall-associated transcription factors and of genes involved in secondary wall biosynthesis and programmed cell death, genes driven by the secondary wall NAC binding element (SNBE). Triggers thickening of secondary walls (PubMed:16103214, PubMed:25148240).</text>
</comment>
<comment type="subunit">
    <text evidence="8">Interacts with NAC083/VNI2.</text>
</comment>
<comment type="subcellular location">
    <subcellularLocation>
        <location evidence="1 3">Nucleus</location>
    </subcellularLocation>
</comment>
<comment type="tissue specificity">
    <text evidence="5 6 7 9">Expressed in root, shoot and hypocotyl vascular elements, columella root caps, epidermal and cortex root cells and root-hypocotyl junctions. Observed predominantly in root imature xylem vessels (PubMed:18445131). Present in root developing xylems (PubMed:16103214, PubMed:17565617). Specifically expressed in vessels in the secondary xylem of the root-hypocotyl region, and in vessels but not in interfascicular fibers in stems (PubMed:25148240).</text>
</comment>
<comment type="developmental stage">
    <text evidence="5 9">Up-regulated during xylem vessel element formation. Expressed preferentially in procambial cells adjacent to root meristem.</text>
</comment>
<comment type="domain">
    <text evidence="3">The NAC domain includes a DNA binding domain and a dimerization domain.</text>
</comment>
<comment type="disruption phenotype">
    <text evidence="10">Embryo deffective.</text>
</comment>
<comment type="similarity">
    <text evidence="14">Belongs to the plant vascular related NAC-domain protein family.</text>
</comment>
<comment type="sequence caution" evidence="14">
    <conflict type="erroneous gene model prediction">
        <sequence resource="EMBL-CDS" id="AAG12568"/>
    </conflict>
</comment>
<keyword id="KW-0010">Activator</keyword>
<keyword id="KW-0961">Cell wall biogenesis/degradation</keyword>
<keyword id="KW-0217">Developmental protein</keyword>
<keyword id="KW-0238">DNA-binding</keyword>
<keyword id="KW-0539">Nucleus</keyword>
<keyword id="KW-1185">Reference proteome</keyword>
<keyword id="KW-0804">Transcription</keyword>
<keyword id="KW-0805">Transcription regulation</keyword>
<sequence>MNSFSHVPPGFRFHPTDEELVDYYLRKKVASKRIEIDFIKDIDLYKIEPWDLQELCKIGHEEQSDWYFFSHKDKKYPTGTRTNRATKAGFWKATGRDKAIYLRHSLIGMRKTLVFYKGRAPNGQKSDWIMHEYRLETDENGTPQEEGWVVCRVFKKRLAAVRRMGDYDSSPSHWYDDQLSFMASELETNGQRRILPNHHQQQQHEHQQHMPYGLNASAYALNNPNLQCKQELELHYNHLVQRNHLLDESHLSFLQLPQLESPKIQQDNSNCNSLPYGTSNIDNNSSHNANLQQSNIAHEEQLNQGNQNFSSLYMNSGNEQVMDQVTDWRVLDKFVASQLSNEEAATASASIQNNAKDTSNAEYQVDEEKDPKRASDMGEEYTASTSSSCQIDLWK</sequence>
<protein>
    <recommendedName>
        <fullName evidence="11">NAC domain-containing protein 7</fullName>
        <shortName evidence="11">ANAC007</shortName>
    </recommendedName>
    <alternativeName>
        <fullName evidence="13">Protein EMBRYO DEFECTIVE 2749</fullName>
    </alternativeName>
    <alternativeName>
        <fullName evidence="12">Protein VASCULAR RELATED NAC-DOMAIN 4</fullName>
    </alternativeName>
</protein>
<feature type="chain" id="PRO_0000376615" description="NAC domain-containing protein 7">
    <location>
        <begin position="1"/>
        <end position="395"/>
    </location>
</feature>
<feature type="domain" description="NAC" evidence="3">
    <location>
        <begin position="7"/>
        <end position="156"/>
    </location>
</feature>
<feature type="DNA-binding region" evidence="3">
    <location>
        <begin position="107"/>
        <end position="162"/>
    </location>
</feature>
<feature type="region of interest" description="Disordered" evidence="4">
    <location>
        <begin position="344"/>
        <end position="395"/>
    </location>
</feature>
<feature type="compositionally biased region" description="Polar residues" evidence="4">
    <location>
        <begin position="344"/>
        <end position="362"/>
    </location>
</feature>
<feature type="compositionally biased region" description="Polar residues" evidence="4">
    <location>
        <begin position="382"/>
        <end position="395"/>
    </location>
</feature>
<name>NAC7_ARATH</name>
<evidence type="ECO:0000250" key="1">
    <source>
        <dbReference type="UniProtKB" id="Q9C8W9"/>
    </source>
</evidence>
<evidence type="ECO:0000250" key="2">
    <source>
        <dbReference type="UniProtKB" id="Q9LVA1"/>
    </source>
</evidence>
<evidence type="ECO:0000255" key="3">
    <source>
        <dbReference type="PROSITE-ProRule" id="PRU00353"/>
    </source>
</evidence>
<evidence type="ECO:0000256" key="4">
    <source>
        <dbReference type="SAM" id="MobiDB-lite"/>
    </source>
</evidence>
<evidence type="ECO:0000269" key="5">
    <source>
    </source>
</evidence>
<evidence type="ECO:0000269" key="6">
    <source>
    </source>
</evidence>
<evidence type="ECO:0000269" key="7">
    <source>
    </source>
</evidence>
<evidence type="ECO:0000269" key="8">
    <source>
    </source>
</evidence>
<evidence type="ECO:0000269" key="9">
    <source>
    </source>
</evidence>
<evidence type="ECO:0000269" key="10">
    <source ref="7"/>
</evidence>
<evidence type="ECO:0000303" key="11">
    <source>
    </source>
</evidence>
<evidence type="ECO:0000303" key="12">
    <source>
    </source>
</evidence>
<evidence type="ECO:0000303" key="13">
    <source ref="7"/>
</evidence>
<evidence type="ECO:0000305" key="14"/>
<evidence type="ECO:0000312" key="15">
    <source>
        <dbReference type="Araport" id="AT1G12260"/>
    </source>
</evidence>
<evidence type="ECO:0000312" key="16">
    <source>
        <dbReference type="EMBL" id="AAG12568.1"/>
    </source>
</evidence>
<reference key="1">
    <citation type="journal article" date="2000" name="Nature">
        <title>Sequence and analysis of chromosome 1 of the plant Arabidopsis thaliana.</title>
        <authorList>
            <person name="Theologis A."/>
            <person name="Ecker J.R."/>
            <person name="Palm C.J."/>
            <person name="Federspiel N.A."/>
            <person name="Kaul S."/>
            <person name="White O."/>
            <person name="Alonso J."/>
            <person name="Altafi H."/>
            <person name="Araujo R."/>
            <person name="Bowman C.L."/>
            <person name="Brooks S.Y."/>
            <person name="Buehler E."/>
            <person name="Chan A."/>
            <person name="Chao Q."/>
            <person name="Chen H."/>
            <person name="Cheuk R.F."/>
            <person name="Chin C.W."/>
            <person name="Chung M.K."/>
            <person name="Conn L."/>
            <person name="Conway A.B."/>
            <person name="Conway A.R."/>
            <person name="Creasy T.H."/>
            <person name="Dewar K."/>
            <person name="Dunn P."/>
            <person name="Etgu P."/>
            <person name="Feldblyum T.V."/>
            <person name="Feng J.-D."/>
            <person name="Fong B."/>
            <person name="Fujii C.Y."/>
            <person name="Gill J.E."/>
            <person name="Goldsmith A.D."/>
            <person name="Haas B."/>
            <person name="Hansen N.F."/>
            <person name="Hughes B."/>
            <person name="Huizar L."/>
            <person name="Hunter J.L."/>
            <person name="Jenkins J."/>
            <person name="Johnson-Hopson C."/>
            <person name="Khan S."/>
            <person name="Khaykin E."/>
            <person name="Kim C.J."/>
            <person name="Koo H.L."/>
            <person name="Kremenetskaia I."/>
            <person name="Kurtz D.B."/>
            <person name="Kwan A."/>
            <person name="Lam B."/>
            <person name="Langin-Hooper S."/>
            <person name="Lee A."/>
            <person name="Lee J.M."/>
            <person name="Lenz C.A."/>
            <person name="Li J.H."/>
            <person name="Li Y.-P."/>
            <person name="Lin X."/>
            <person name="Liu S.X."/>
            <person name="Liu Z.A."/>
            <person name="Luros J.S."/>
            <person name="Maiti R."/>
            <person name="Marziali A."/>
            <person name="Militscher J."/>
            <person name="Miranda M."/>
            <person name="Nguyen M."/>
            <person name="Nierman W.C."/>
            <person name="Osborne B.I."/>
            <person name="Pai G."/>
            <person name="Peterson J."/>
            <person name="Pham P.K."/>
            <person name="Rizzo M."/>
            <person name="Rooney T."/>
            <person name="Rowley D."/>
            <person name="Sakano H."/>
            <person name="Salzberg S.L."/>
            <person name="Schwartz J.R."/>
            <person name="Shinn P."/>
            <person name="Southwick A.M."/>
            <person name="Sun H."/>
            <person name="Tallon L.J."/>
            <person name="Tambunga G."/>
            <person name="Toriumi M.J."/>
            <person name="Town C.D."/>
            <person name="Utterback T."/>
            <person name="Van Aken S."/>
            <person name="Vaysberg M."/>
            <person name="Vysotskaia V.S."/>
            <person name="Walker M."/>
            <person name="Wu D."/>
            <person name="Yu G."/>
            <person name="Fraser C.M."/>
            <person name="Venter J.C."/>
            <person name="Davis R.W."/>
        </authorList>
    </citation>
    <scope>NUCLEOTIDE SEQUENCE [LARGE SCALE GENOMIC DNA]</scope>
    <source>
        <strain>cv. Columbia</strain>
    </source>
</reference>
<reference key="2">
    <citation type="journal article" date="2017" name="Plant J.">
        <title>Araport11: a complete reannotation of the Arabidopsis thaliana reference genome.</title>
        <authorList>
            <person name="Cheng C.Y."/>
            <person name="Krishnakumar V."/>
            <person name="Chan A.P."/>
            <person name="Thibaud-Nissen F."/>
            <person name="Schobel S."/>
            <person name="Town C.D."/>
        </authorList>
    </citation>
    <scope>GENOME REANNOTATION</scope>
    <source>
        <strain>cv. Columbia</strain>
    </source>
</reference>
<reference key="3">
    <citation type="submission" date="2006-12" db="EMBL/GenBank/DDBJ databases">
        <title>Arabidopsis ORF clones.</title>
        <authorList>
            <person name="Bautista V.R."/>
            <person name="Kim C.J."/>
            <person name="Chen H."/>
            <person name="Wu S.Y."/>
            <person name="De Los Reyes C."/>
            <person name="Ecker J.R."/>
        </authorList>
    </citation>
    <scope>NUCLEOTIDE SEQUENCE [LARGE SCALE MRNA]</scope>
    <source>
        <strain>cv. Columbia</strain>
    </source>
</reference>
<reference key="4">
    <citation type="journal article" date="2003" name="DNA Res.">
        <title>Comprehensive analysis of NAC family genes in Oryza sativa and Arabidopsis thaliana.</title>
        <authorList>
            <person name="Ooka H."/>
            <person name="Satoh K."/>
            <person name="Doi K."/>
            <person name="Nagata T."/>
            <person name="Otomo Y."/>
            <person name="Murakami K."/>
            <person name="Matsubara K."/>
            <person name="Osato N."/>
            <person name="Kawai J."/>
            <person name="Carninci P."/>
            <person name="Hayashizaki Y."/>
            <person name="Suzuki K."/>
            <person name="Kojima K."/>
            <person name="Takahara Y."/>
            <person name="Yamamoto K."/>
            <person name="Kikuchi S."/>
        </authorList>
    </citation>
    <scope>GENE FAMILY</scope>
    <scope>NOMENCLATURE</scope>
</reference>
<reference key="5">
    <citation type="journal article" date="2005" name="Genes Dev.">
        <title>Transcription switches for protoxylem and metaxylem vessel formation.</title>
        <authorList>
            <person name="Kubo M."/>
            <person name="Udagawa M."/>
            <person name="Nishikubo N."/>
            <person name="Horiguchi G."/>
            <person name="Yamaguchi M."/>
            <person name="Ito J."/>
            <person name="Mimura T."/>
            <person name="Fukuda H."/>
            <person name="Demura T."/>
        </authorList>
    </citation>
    <scope>FUNCTION</scope>
    <scope>TISSUE SPECIFICITY</scope>
    <scope>DEVELOPMENTAL STAGE</scope>
    <scope>GENE FAMILY</scope>
    <scope>NOMENCLATURE</scope>
</reference>
<reference key="6">
    <citation type="journal article" date="2007" name="Plant J.">
        <title>ANAC012, a member of the plant-specific NAC transcription factor family, negatively regulates xylary fiber development in Arabidopsis thaliana.</title>
        <authorList>
            <person name="Ko J.-H."/>
            <person name="Yang S.H."/>
            <person name="Park A.H."/>
            <person name="Lerouxel O."/>
            <person name="Han K.-H."/>
        </authorList>
    </citation>
    <scope>TISSUE SPECIFICITY</scope>
</reference>
<reference key="7">
    <citation type="book" date="2008" name="Abstracts of the 19th international conference on Arabidopsis research">
        <title>The Arabidopsis SeedGenes project: approaching saturation for essential genes.</title>
        <authorList>
            <person name="Muralla R."/>
            <person name="Sweeney C."/>
            <person name="Lloyd J."/>
            <person name="Meinke D."/>
            <person name="Dickerman A."/>
        </authorList>
    </citation>
    <scope>DISRUPTION PHENOTYPE</scope>
</reference>
<reference key="8">
    <citation type="journal article" date="2008" name="Plant J.">
        <title>Vascular-related NAC-DOMAIN7 is involved in the differentiation of all types of xylem vessels in Arabidopsis roots and shoots.</title>
        <authorList>
            <person name="Yamaguchi M."/>
            <person name="Kubo M."/>
            <person name="Fukuda H."/>
            <person name="Demura T."/>
        </authorList>
    </citation>
    <scope>TISSUE SPECIFICITY</scope>
</reference>
<reference key="9">
    <citation type="journal article" date="2010" name="Plant Cell">
        <title>VND-INTERACTING2, a NAC domain transcription factor, negatively regulates xylem vessel formation in Arabidopsis.</title>
        <authorList>
            <person name="Yamaguchi M."/>
            <person name="Ohtani M."/>
            <person name="Mitsuda N."/>
            <person name="Kubo M."/>
            <person name="Ohme-Takagi M."/>
            <person name="Fukuda H."/>
            <person name="Demura T."/>
        </authorList>
    </citation>
    <scope>INTERACTION WITH NAC083/VNI2</scope>
</reference>
<reference key="10">
    <citation type="journal article" date="2014" name="PLoS ONE">
        <title>Arabidopsis NAC domain proteins, VND1 to VND5, are transcriptional regulators of secondary wall biosynthesis in vessels.</title>
        <authorList>
            <person name="Zhou J."/>
            <person name="Zhong R."/>
            <person name="Ye Z.-H."/>
        </authorList>
    </citation>
    <scope>FUNCTION</scope>
    <scope>TISSUE SPECIFICITY</scope>
    <scope>DEVELOPMENTAL STAGE</scope>
</reference>
<accession>Q9FWX2</accession>
<accession>A1L4X4</accession>
<gene>
    <name evidence="11" type="primary">NAC007</name>
    <name evidence="13" type="synonym">EMB2749</name>
    <name evidence="12" type="synonym">VND4</name>
    <name evidence="15" type="ordered locus">At1g12260</name>
    <name evidence="16" type="ORF">T28K15.1</name>
</gene>
<organism>
    <name type="scientific">Arabidopsis thaliana</name>
    <name type="common">Mouse-ear cress</name>
    <dbReference type="NCBI Taxonomy" id="3702"/>
    <lineage>
        <taxon>Eukaryota</taxon>
        <taxon>Viridiplantae</taxon>
        <taxon>Streptophyta</taxon>
        <taxon>Embryophyta</taxon>
        <taxon>Tracheophyta</taxon>
        <taxon>Spermatophyta</taxon>
        <taxon>Magnoliopsida</taxon>
        <taxon>eudicotyledons</taxon>
        <taxon>Gunneridae</taxon>
        <taxon>Pentapetalae</taxon>
        <taxon>rosids</taxon>
        <taxon>malvids</taxon>
        <taxon>Brassicales</taxon>
        <taxon>Brassicaceae</taxon>
        <taxon>Camelineae</taxon>
        <taxon>Arabidopsis</taxon>
    </lineage>
</organism>
<proteinExistence type="evidence at protein level"/>
<dbReference type="EMBL" id="AC022522">
    <property type="protein sequence ID" value="AAG12568.1"/>
    <property type="status" value="ALT_SEQ"/>
    <property type="molecule type" value="Genomic_DNA"/>
</dbReference>
<dbReference type="EMBL" id="CP002684">
    <property type="protein sequence ID" value="AEE28859.1"/>
    <property type="molecule type" value="Genomic_DNA"/>
</dbReference>
<dbReference type="EMBL" id="BT029761">
    <property type="protein sequence ID" value="ABM06031.1"/>
    <property type="molecule type" value="mRNA"/>
</dbReference>
<dbReference type="PIR" id="G86257">
    <property type="entry name" value="G86257"/>
</dbReference>
<dbReference type="RefSeq" id="NP_172690.1">
    <property type="nucleotide sequence ID" value="NM_101098.5"/>
</dbReference>
<dbReference type="SMR" id="Q9FWX2"/>
<dbReference type="BioGRID" id="23020">
    <property type="interactions" value="1"/>
</dbReference>
<dbReference type="FunCoup" id="Q9FWX2">
    <property type="interactions" value="96"/>
</dbReference>
<dbReference type="IntAct" id="Q9FWX2">
    <property type="interactions" value="2"/>
</dbReference>
<dbReference type="STRING" id="3702.Q9FWX2"/>
<dbReference type="PaxDb" id="3702-AT1G12260.1"/>
<dbReference type="EnsemblPlants" id="AT1G12260.1">
    <property type="protein sequence ID" value="AT1G12260.1"/>
    <property type="gene ID" value="AT1G12260"/>
</dbReference>
<dbReference type="GeneID" id="837780"/>
<dbReference type="Gramene" id="AT1G12260.1">
    <property type="protein sequence ID" value="AT1G12260.1"/>
    <property type="gene ID" value="AT1G12260"/>
</dbReference>
<dbReference type="KEGG" id="ath:AT1G12260"/>
<dbReference type="Araport" id="AT1G12260"/>
<dbReference type="TAIR" id="AT1G12260">
    <property type="gene designation" value="NAC007"/>
</dbReference>
<dbReference type="eggNOG" id="ENOG502QT6P">
    <property type="taxonomic scope" value="Eukaryota"/>
</dbReference>
<dbReference type="HOGENOM" id="CLU_035664_1_2_1"/>
<dbReference type="InParanoid" id="Q9FWX2"/>
<dbReference type="OMA" id="DLWSFAG"/>
<dbReference type="OrthoDB" id="1919458at2759"/>
<dbReference type="PhylomeDB" id="Q9FWX2"/>
<dbReference type="PRO" id="PR:Q9FWX2"/>
<dbReference type="Proteomes" id="UP000006548">
    <property type="component" value="Chromosome 1"/>
</dbReference>
<dbReference type="ExpressionAtlas" id="Q9FWX2">
    <property type="expression patterns" value="baseline and differential"/>
</dbReference>
<dbReference type="GO" id="GO:0005634">
    <property type="term" value="C:nucleus"/>
    <property type="evidence" value="ECO:0007669"/>
    <property type="project" value="UniProtKB-SubCell"/>
</dbReference>
<dbReference type="GO" id="GO:0003700">
    <property type="term" value="F:DNA-binding transcription factor activity"/>
    <property type="evidence" value="ECO:0000250"/>
    <property type="project" value="UniProtKB"/>
</dbReference>
<dbReference type="GO" id="GO:0043565">
    <property type="term" value="F:sequence-specific DNA binding"/>
    <property type="evidence" value="ECO:0000250"/>
    <property type="project" value="UniProtKB"/>
</dbReference>
<dbReference type="GO" id="GO:0000976">
    <property type="term" value="F:transcription cis-regulatory region binding"/>
    <property type="evidence" value="ECO:0000353"/>
    <property type="project" value="TAIR"/>
</dbReference>
<dbReference type="GO" id="GO:0071555">
    <property type="term" value="P:cell wall organization"/>
    <property type="evidence" value="ECO:0007669"/>
    <property type="project" value="UniProtKB-KW"/>
</dbReference>
<dbReference type="GO" id="GO:1901348">
    <property type="term" value="P:positive regulation of secondary cell wall biogenesis"/>
    <property type="evidence" value="ECO:0000315"/>
    <property type="project" value="TAIR"/>
</dbReference>
<dbReference type="GO" id="GO:0006355">
    <property type="term" value="P:regulation of DNA-templated transcription"/>
    <property type="evidence" value="ECO:0000315"/>
    <property type="project" value="TAIR"/>
</dbReference>
<dbReference type="GO" id="GO:0048759">
    <property type="term" value="P:xylem vessel member cell differentiation"/>
    <property type="evidence" value="ECO:0000315"/>
    <property type="project" value="TAIR"/>
</dbReference>
<dbReference type="FunFam" id="2.170.150.80:FF:000003">
    <property type="entry name" value="NAC domain-containing protein"/>
    <property type="match status" value="1"/>
</dbReference>
<dbReference type="Gene3D" id="2.170.150.80">
    <property type="entry name" value="NAC domain"/>
    <property type="match status" value="1"/>
</dbReference>
<dbReference type="InterPro" id="IPR003441">
    <property type="entry name" value="NAC-dom"/>
</dbReference>
<dbReference type="InterPro" id="IPR036093">
    <property type="entry name" value="NAC_dom_sf"/>
</dbReference>
<dbReference type="PANTHER" id="PTHR31744:SF230">
    <property type="entry name" value="NAC DOMAIN-CONTAINING PROTEIN"/>
    <property type="match status" value="1"/>
</dbReference>
<dbReference type="PANTHER" id="PTHR31744">
    <property type="entry name" value="PROTEIN CUP-SHAPED COTYLEDON 2-RELATED"/>
    <property type="match status" value="1"/>
</dbReference>
<dbReference type="Pfam" id="PF02365">
    <property type="entry name" value="NAM"/>
    <property type="match status" value="1"/>
</dbReference>
<dbReference type="SUPFAM" id="SSF101941">
    <property type="entry name" value="NAC domain"/>
    <property type="match status" value="1"/>
</dbReference>
<dbReference type="PROSITE" id="PS51005">
    <property type="entry name" value="NAC"/>
    <property type="match status" value="1"/>
</dbReference>